<name>PPME1_CAEEL</name>
<gene>
    <name type="ORF">B0464.9</name>
</gene>
<proteinExistence type="inferred from homology"/>
<comment type="function">
    <text evidence="1">Demethylates proteins that have been reversibly carboxymethylated.</text>
</comment>
<comment type="catalytic activity">
    <reaction>
        <text>[phosphatase 2A protein]-C-terminal L-leucine methyl ester + H2O = [phosphatase 2A protein]-C-terminal L-leucine + methanol + H(+)</text>
        <dbReference type="Rhea" id="RHEA:48548"/>
        <dbReference type="Rhea" id="RHEA-COMP:12134"/>
        <dbReference type="Rhea" id="RHEA-COMP:12135"/>
        <dbReference type="ChEBI" id="CHEBI:15377"/>
        <dbReference type="ChEBI" id="CHEBI:15378"/>
        <dbReference type="ChEBI" id="CHEBI:17790"/>
        <dbReference type="ChEBI" id="CHEBI:90516"/>
        <dbReference type="ChEBI" id="CHEBI:90517"/>
        <dbReference type="EC" id="3.1.1.89"/>
    </reaction>
</comment>
<comment type="similarity">
    <text evidence="3">Belongs to the AB hydrolase superfamily.</text>
</comment>
<reference key="1">
    <citation type="journal article" date="1994" name="Nature">
        <title>2.2 Mb of contiguous nucleotide sequence from chromosome III of C. elegans.</title>
        <authorList>
            <person name="Wilson R."/>
            <person name="Ainscough R."/>
            <person name="Anderson K."/>
            <person name="Baynes C."/>
            <person name="Berks M."/>
            <person name="Bonfield J."/>
            <person name="Burton J."/>
            <person name="Connell M."/>
            <person name="Copsey T."/>
            <person name="Cooper J."/>
            <person name="Coulson A."/>
            <person name="Craxton M."/>
            <person name="Dear S."/>
            <person name="Du Z."/>
            <person name="Durbin R."/>
            <person name="Favello A."/>
            <person name="Fraser A."/>
            <person name="Fulton L."/>
            <person name="Gardner A."/>
            <person name="Green P."/>
            <person name="Hawkins T."/>
            <person name="Hillier L."/>
            <person name="Jier M."/>
            <person name="Johnston L."/>
            <person name="Jones M."/>
            <person name="Kershaw J."/>
            <person name="Kirsten J."/>
            <person name="Laisster N."/>
            <person name="Latreille P."/>
            <person name="Lightning J."/>
            <person name="Lloyd C."/>
            <person name="Mortimore B."/>
            <person name="O'Callaghan M."/>
            <person name="Parsons J."/>
            <person name="Percy C."/>
            <person name="Rifken L."/>
            <person name="Roopra A."/>
            <person name="Saunders D."/>
            <person name="Shownkeen R."/>
            <person name="Sims M."/>
            <person name="Smaldon N."/>
            <person name="Smith A."/>
            <person name="Smith M."/>
            <person name="Sonnhammer E."/>
            <person name="Staden R."/>
            <person name="Sulston J."/>
            <person name="Thierry-Mieg J."/>
            <person name="Thomas K."/>
            <person name="Vaudin M."/>
            <person name="Vaughan K."/>
            <person name="Waterston R."/>
            <person name="Watson A."/>
            <person name="Weinstock L."/>
            <person name="Wilkinson-Sproat J."/>
            <person name="Wohldman P."/>
        </authorList>
    </citation>
    <scope>NUCLEOTIDE SEQUENCE [LARGE SCALE GENOMIC DNA]</scope>
    <source>
        <strain>Bristol N2</strain>
    </source>
</reference>
<reference key="2">
    <citation type="journal article" date="1998" name="Science">
        <title>Genome sequence of the nematode C. elegans: a platform for investigating biology.</title>
        <authorList>
            <consortium name="The C. elegans sequencing consortium"/>
        </authorList>
    </citation>
    <scope>NUCLEOTIDE SEQUENCE [LARGE SCALE GENOMIC DNA]</scope>
    <source>
        <strain>Bristol N2</strain>
    </source>
</reference>
<organism>
    <name type="scientific">Caenorhabditis elegans</name>
    <dbReference type="NCBI Taxonomy" id="6239"/>
    <lineage>
        <taxon>Eukaryota</taxon>
        <taxon>Metazoa</taxon>
        <taxon>Ecdysozoa</taxon>
        <taxon>Nematoda</taxon>
        <taxon>Chromadorea</taxon>
        <taxon>Rhabditida</taxon>
        <taxon>Rhabditina</taxon>
        <taxon>Rhabditomorpha</taxon>
        <taxon>Rhabditoidea</taxon>
        <taxon>Rhabditidae</taxon>
        <taxon>Peloderinae</taxon>
        <taxon>Caenorhabditis</taxon>
    </lineage>
</organism>
<feature type="chain" id="PRO_0000065085" description="Probable protein phosphatase methylesterase 1">
    <location>
        <begin position="1"/>
        <end position="364"/>
    </location>
</feature>
<feature type="region of interest" description="Disordered" evidence="2">
    <location>
        <begin position="1"/>
        <end position="53"/>
    </location>
</feature>
<feature type="compositionally biased region" description="Polar residues" evidence="2">
    <location>
        <begin position="11"/>
        <end position="23"/>
    </location>
</feature>
<feature type="active site" evidence="1">
    <location>
        <position position="164"/>
    </location>
</feature>
<feature type="active site" evidence="1">
    <location>
        <position position="190"/>
    </location>
</feature>
<feature type="active site" evidence="1">
    <location>
        <position position="316"/>
    </location>
</feature>
<keyword id="KW-0378">Hydrolase</keyword>
<keyword id="KW-1185">Reference proteome</keyword>
<keyword id="KW-0719">Serine esterase</keyword>
<protein>
    <recommendedName>
        <fullName>Probable protein phosphatase methylesterase 1</fullName>
        <shortName>PME-1</shortName>
        <ecNumber>3.1.1.89</ecNumber>
    </recommendedName>
</protein>
<evidence type="ECO:0000250" key="1"/>
<evidence type="ECO:0000256" key="2">
    <source>
        <dbReference type="SAM" id="MobiDB-lite"/>
    </source>
</evidence>
<evidence type="ECO:0000305" key="3"/>
<dbReference type="EC" id="3.1.1.89"/>
<dbReference type="EMBL" id="Z19152">
    <property type="protein sequence ID" value="CAC35809.1"/>
    <property type="molecule type" value="Genomic_DNA"/>
</dbReference>
<dbReference type="RefSeq" id="NP_499084.1">
    <property type="nucleotide sequence ID" value="NM_066683.6"/>
</dbReference>
<dbReference type="SMR" id="Q9BIB3"/>
<dbReference type="BioGRID" id="46862">
    <property type="interactions" value="5"/>
</dbReference>
<dbReference type="FunCoup" id="Q9BIB3">
    <property type="interactions" value="3505"/>
</dbReference>
<dbReference type="STRING" id="6239.B0464.9.1"/>
<dbReference type="ESTHER" id="caeel-ppme1">
    <property type="family name" value="PPase_methylesterase_euk"/>
</dbReference>
<dbReference type="MEROPS" id="S33.B12"/>
<dbReference type="PaxDb" id="6239-B0464.9"/>
<dbReference type="PeptideAtlas" id="Q9BIB3"/>
<dbReference type="EnsemblMetazoa" id="B0464.9.1">
    <property type="protein sequence ID" value="B0464.9.1"/>
    <property type="gene ID" value="WBGene00007188"/>
</dbReference>
<dbReference type="GeneID" id="181999"/>
<dbReference type="KEGG" id="cel:CELE_B0464.9"/>
<dbReference type="UCSC" id="B0464.9">
    <property type="organism name" value="c. elegans"/>
</dbReference>
<dbReference type="AGR" id="WB:WBGene00007188"/>
<dbReference type="CTD" id="181999"/>
<dbReference type="WormBase" id="B0464.9">
    <property type="protein sequence ID" value="CE26705"/>
    <property type="gene ID" value="WBGene00007188"/>
</dbReference>
<dbReference type="eggNOG" id="KOG2564">
    <property type="taxonomic scope" value="Eukaryota"/>
</dbReference>
<dbReference type="GeneTree" id="ENSGT00390000004396"/>
<dbReference type="HOGENOM" id="CLU_024818_3_1_1"/>
<dbReference type="InParanoid" id="Q9BIB3"/>
<dbReference type="OMA" id="QGKFQTC"/>
<dbReference type="OrthoDB" id="194865at2759"/>
<dbReference type="PhylomeDB" id="Q9BIB3"/>
<dbReference type="Reactome" id="R-CEL-69273">
    <property type="pathway name" value="Cyclin A/B1/B2 associated events during G2/M transition"/>
</dbReference>
<dbReference type="PRO" id="PR:Q9BIB3"/>
<dbReference type="Proteomes" id="UP000001940">
    <property type="component" value="Chromosome III"/>
</dbReference>
<dbReference type="Bgee" id="WBGene00007188">
    <property type="expression patterns" value="Expressed in embryo and 3 other cell types or tissues"/>
</dbReference>
<dbReference type="GO" id="GO:0051722">
    <property type="term" value="F:protein C-terminal methylesterase activity"/>
    <property type="evidence" value="ECO:0000250"/>
    <property type="project" value="UniProtKB"/>
</dbReference>
<dbReference type="GO" id="GO:0051721">
    <property type="term" value="F:protein phosphatase 2A binding"/>
    <property type="evidence" value="ECO:0000250"/>
    <property type="project" value="UniProtKB"/>
</dbReference>
<dbReference type="FunFam" id="3.40.50.1820:FF:000152">
    <property type="entry name" value="Protein phosphatase methylesterase 1"/>
    <property type="match status" value="1"/>
</dbReference>
<dbReference type="Gene3D" id="3.40.50.1820">
    <property type="entry name" value="alpha/beta hydrolase"/>
    <property type="match status" value="1"/>
</dbReference>
<dbReference type="InterPro" id="IPR000073">
    <property type="entry name" value="AB_hydrolase_1"/>
</dbReference>
<dbReference type="InterPro" id="IPR029058">
    <property type="entry name" value="AB_hydrolase_fold"/>
</dbReference>
<dbReference type="InterPro" id="IPR000639">
    <property type="entry name" value="Epox_hydrolase-like"/>
</dbReference>
<dbReference type="InterPro" id="IPR016812">
    <property type="entry name" value="PPase_methylesterase_euk"/>
</dbReference>
<dbReference type="PANTHER" id="PTHR14189:SF0">
    <property type="entry name" value="PROTEIN PHOSPHATASE METHYLESTERASE 1"/>
    <property type="match status" value="1"/>
</dbReference>
<dbReference type="PANTHER" id="PTHR14189">
    <property type="entry name" value="PROTEIN PHOSPHATASE METHYLESTERASE-1 RELATED"/>
    <property type="match status" value="1"/>
</dbReference>
<dbReference type="Pfam" id="PF12697">
    <property type="entry name" value="Abhydrolase_6"/>
    <property type="match status" value="1"/>
</dbReference>
<dbReference type="PIRSF" id="PIRSF022950">
    <property type="entry name" value="PPase_methylesterase_euk"/>
    <property type="match status" value="1"/>
</dbReference>
<dbReference type="PRINTS" id="PR00111">
    <property type="entry name" value="ABHYDROLASE"/>
</dbReference>
<dbReference type="PRINTS" id="PR00412">
    <property type="entry name" value="EPOXHYDRLASE"/>
</dbReference>
<dbReference type="SUPFAM" id="SSF53474">
    <property type="entry name" value="alpha/beta-Hydrolases"/>
    <property type="match status" value="1"/>
</dbReference>
<dbReference type="PROSITE" id="PS00120">
    <property type="entry name" value="LIPASE_SER"/>
    <property type="match status" value="1"/>
</dbReference>
<accession>Q9BIB3</accession>
<sequence>MSDDKLDTLPDLQSETSHVTTPHRQNDLLRQAVTHGRPPPVPSTSTSGKKREMSELPWSDFFDEKKDANIDGDVFNVYIKGNEGPIFYLLHGGGYSGLTWACFAKELATLISCRVVAPDLRGHGDTKCSDEHDLSKETQIKDIGAIFKNIFGEDDSPVCIVGHSMGGALAIHTLNAKMISSKVAALIVIDVVEGSAMEALGGMVHFLHSRPSSFPSIEKAIHWCLSSGTARNPTAARVSMPSQIREVSEHEYTWRIDLTTTEQYWKGWFEGLSKEFLGCSVPKMLVLAGVDRLDRDLTIGQMQGKFQTCVLPKVGHCVQEDSPQNLADEVGRFACRHRIAQPKFSALASPPDPAILEYRKRHHQ</sequence>